<accession>A7GTP0</accession>
<organism>
    <name type="scientific">Bacillus cytotoxicus (strain DSM 22905 / CIP 110041 / 391-98 / NVH 391-98)</name>
    <dbReference type="NCBI Taxonomy" id="315749"/>
    <lineage>
        <taxon>Bacteria</taxon>
        <taxon>Bacillati</taxon>
        <taxon>Bacillota</taxon>
        <taxon>Bacilli</taxon>
        <taxon>Bacillales</taxon>
        <taxon>Bacillaceae</taxon>
        <taxon>Bacillus</taxon>
        <taxon>Bacillus cereus group</taxon>
    </lineage>
</organism>
<reference key="1">
    <citation type="journal article" date="2008" name="Chem. Biol. Interact.">
        <title>Extending the Bacillus cereus group genomics to putative food-borne pathogens of different toxicity.</title>
        <authorList>
            <person name="Lapidus A."/>
            <person name="Goltsman E."/>
            <person name="Auger S."/>
            <person name="Galleron N."/>
            <person name="Segurens B."/>
            <person name="Dossat C."/>
            <person name="Land M.L."/>
            <person name="Broussolle V."/>
            <person name="Brillard J."/>
            <person name="Guinebretiere M.-H."/>
            <person name="Sanchis V."/>
            <person name="Nguen-the C."/>
            <person name="Lereclus D."/>
            <person name="Richardson P."/>
            <person name="Wincker P."/>
            <person name="Weissenbach J."/>
            <person name="Ehrlich S.D."/>
            <person name="Sorokin A."/>
        </authorList>
    </citation>
    <scope>NUCLEOTIDE SEQUENCE [LARGE SCALE GENOMIC DNA]</scope>
    <source>
        <strain>DSM 22905 / CIP 110041 / 391-98 / NVH 391-98</strain>
    </source>
</reference>
<evidence type="ECO:0000255" key="1">
    <source>
        <dbReference type="HAMAP-Rule" id="MF_01874"/>
    </source>
</evidence>
<gene>
    <name type="ordered locus">Bcer98_3279</name>
</gene>
<comment type="subcellular location">
    <subcellularLocation>
        <location evidence="1">Cell membrane</location>
        <topology evidence="1">Multi-pass membrane protein</topology>
    </subcellularLocation>
</comment>
<comment type="similarity">
    <text evidence="1">Belongs to the UPF0756 family.</text>
</comment>
<sequence>MISQSTLFLFILLIIGLIAKNQSLIVAICVLFVLKWTFLGDKILPYLQTKGINLGVTVITIAVLVPIATGEIGFKQLGEATKSYYAWIALASGIAVALLAKGGLQLLTNDPHITTALVFGTIIAVALFNGVAVGPLIGAGIAYAVMNIIQMFK</sequence>
<name>Y3279_BACCN</name>
<keyword id="KW-1003">Cell membrane</keyword>
<keyword id="KW-0472">Membrane</keyword>
<keyword id="KW-0812">Transmembrane</keyword>
<keyword id="KW-1133">Transmembrane helix</keyword>
<proteinExistence type="inferred from homology"/>
<dbReference type="EMBL" id="CP000764">
    <property type="protein sequence ID" value="ABS23498.1"/>
    <property type="molecule type" value="Genomic_DNA"/>
</dbReference>
<dbReference type="RefSeq" id="WP_012095739.1">
    <property type="nucleotide sequence ID" value="NC_009674.1"/>
</dbReference>
<dbReference type="STRING" id="315749.Bcer98_3279"/>
<dbReference type="GeneID" id="33898524"/>
<dbReference type="KEGG" id="bcy:Bcer98_3279"/>
<dbReference type="eggNOG" id="COG2707">
    <property type="taxonomic scope" value="Bacteria"/>
</dbReference>
<dbReference type="HOGENOM" id="CLU_125889_1_0_9"/>
<dbReference type="OrthoDB" id="80306at2"/>
<dbReference type="Proteomes" id="UP000002300">
    <property type="component" value="Chromosome"/>
</dbReference>
<dbReference type="GO" id="GO:0005886">
    <property type="term" value="C:plasma membrane"/>
    <property type="evidence" value="ECO:0007669"/>
    <property type="project" value="UniProtKB-SubCell"/>
</dbReference>
<dbReference type="HAMAP" id="MF_01874">
    <property type="entry name" value="UPF0756"/>
    <property type="match status" value="1"/>
</dbReference>
<dbReference type="InterPro" id="IPR007382">
    <property type="entry name" value="UPF0756_TM"/>
</dbReference>
<dbReference type="PANTHER" id="PTHR38452">
    <property type="entry name" value="UPF0756 MEMBRANE PROTEIN YEAL"/>
    <property type="match status" value="1"/>
</dbReference>
<dbReference type="PANTHER" id="PTHR38452:SF1">
    <property type="entry name" value="UPF0756 MEMBRANE PROTEIN YEAL"/>
    <property type="match status" value="1"/>
</dbReference>
<dbReference type="Pfam" id="PF04284">
    <property type="entry name" value="DUF441"/>
    <property type="match status" value="1"/>
</dbReference>
<protein>
    <recommendedName>
        <fullName evidence="1">UPF0756 membrane protein Bcer98_3279</fullName>
    </recommendedName>
</protein>
<feature type="chain" id="PRO_5000266705" description="UPF0756 membrane protein Bcer98_3279">
    <location>
        <begin position="1"/>
        <end position="153"/>
    </location>
</feature>
<feature type="transmembrane region" description="Helical" evidence="1">
    <location>
        <begin position="8"/>
        <end position="28"/>
    </location>
</feature>
<feature type="transmembrane region" description="Helical" evidence="1">
    <location>
        <begin position="54"/>
        <end position="74"/>
    </location>
</feature>
<feature type="transmembrane region" description="Helical" evidence="1">
    <location>
        <begin position="87"/>
        <end position="107"/>
    </location>
</feature>
<feature type="transmembrane region" description="Helical" evidence="1">
    <location>
        <begin position="117"/>
        <end position="137"/>
    </location>
</feature>